<keyword id="KW-0028">Amino-acid biosynthesis</keyword>
<keyword id="KW-0963">Cytoplasm</keyword>
<keyword id="KW-0368">Histidine biosynthesis</keyword>
<keyword id="KW-0378">Hydrolase</keyword>
<keyword id="KW-0460">Magnesium</keyword>
<keyword id="KW-0479">Metal-binding</keyword>
<keyword id="KW-1185">Reference proteome</keyword>
<keyword id="KW-0862">Zinc</keyword>
<feature type="chain" id="PRO_0000319691" description="Phosphoribosyl-AMP cyclohydrolase">
    <location>
        <begin position="1"/>
        <end position="131"/>
    </location>
</feature>
<feature type="binding site" evidence="1">
    <location>
        <position position="90"/>
    </location>
    <ligand>
        <name>Mg(2+)</name>
        <dbReference type="ChEBI" id="CHEBI:18420"/>
    </ligand>
</feature>
<feature type="binding site" evidence="1">
    <location>
        <position position="91"/>
    </location>
    <ligand>
        <name>Zn(2+)</name>
        <dbReference type="ChEBI" id="CHEBI:29105"/>
        <note>ligand shared between dimeric partners</note>
    </ligand>
</feature>
<feature type="binding site" evidence="1">
    <location>
        <position position="92"/>
    </location>
    <ligand>
        <name>Mg(2+)</name>
        <dbReference type="ChEBI" id="CHEBI:18420"/>
    </ligand>
</feature>
<feature type="binding site" evidence="1">
    <location>
        <position position="94"/>
    </location>
    <ligand>
        <name>Mg(2+)</name>
        <dbReference type="ChEBI" id="CHEBI:18420"/>
    </ligand>
</feature>
<feature type="binding site" evidence="1">
    <location>
        <position position="107"/>
    </location>
    <ligand>
        <name>Zn(2+)</name>
        <dbReference type="ChEBI" id="CHEBI:29105"/>
        <note>ligand shared between dimeric partners</note>
    </ligand>
</feature>
<feature type="binding site" evidence="1">
    <location>
        <position position="114"/>
    </location>
    <ligand>
        <name>Zn(2+)</name>
        <dbReference type="ChEBI" id="CHEBI:29105"/>
        <note>ligand shared between dimeric partners</note>
    </ligand>
</feature>
<name>HIS3_HYPNA</name>
<organism>
    <name type="scientific">Hyphomonas neptunium (strain ATCC 15444)</name>
    <dbReference type="NCBI Taxonomy" id="228405"/>
    <lineage>
        <taxon>Bacteria</taxon>
        <taxon>Pseudomonadati</taxon>
        <taxon>Pseudomonadota</taxon>
        <taxon>Alphaproteobacteria</taxon>
        <taxon>Hyphomonadales</taxon>
        <taxon>Hyphomonadaceae</taxon>
        <taxon>Hyphomonas</taxon>
    </lineage>
</organism>
<sequence length="131" mass="14378">MTPFPPPLSGSAQDETPELRPRFDENGLIAAIAQDAGTGEVLMLAWMNAEALQKTIETGRATYWSRSRGALWVKGETSGHTQEVIELRVDCDQDAVLLKVRQTGGACHTHRESCFYRRIEGGVLSFTGKAD</sequence>
<proteinExistence type="inferred from homology"/>
<comment type="function">
    <text evidence="1">Catalyzes the hydrolysis of the adenine ring of phosphoribosyl-AMP.</text>
</comment>
<comment type="catalytic activity">
    <reaction evidence="1">
        <text>1-(5-phospho-beta-D-ribosyl)-5'-AMP + H2O = 1-(5-phospho-beta-D-ribosyl)-5-[(5-phospho-beta-D-ribosylamino)methylideneamino]imidazole-4-carboxamide</text>
        <dbReference type="Rhea" id="RHEA:20049"/>
        <dbReference type="ChEBI" id="CHEBI:15377"/>
        <dbReference type="ChEBI" id="CHEBI:58435"/>
        <dbReference type="ChEBI" id="CHEBI:59457"/>
        <dbReference type="EC" id="3.5.4.19"/>
    </reaction>
</comment>
<comment type="cofactor">
    <cofactor evidence="1">
        <name>Mg(2+)</name>
        <dbReference type="ChEBI" id="CHEBI:18420"/>
    </cofactor>
    <text evidence="1">Binds 1 Mg(2+) ion per subunit.</text>
</comment>
<comment type="cofactor">
    <cofactor evidence="1">
        <name>Zn(2+)</name>
        <dbReference type="ChEBI" id="CHEBI:29105"/>
    </cofactor>
    <text evidence="1">Binds 1 zinc ion per subunit.</text>
</comment>
<comment type="pathway">
    <text evidence="1">Amino-acid biosynthesis; L-histidine biosynthesis; L-histidine from 5-phospho-alpha-D-ribose 1-diphosphate: step 3/9.</text>
</comment>
<comment type="subunit">
    <text evidence="1">Homodimer.</text>
</comment>
<comment type="subcellular location">
    <subcellularLocation>
        <location evidence="1">Cytoplasm</location>
    </subcellularLocation>
</comment>
<comment type="similarity">
    <text evidence="1">Belongs to the PRA-CH family.</text>
</comment>
<accession>Q0BWU4</accession>
<dbReference type="EC" id="3.5.4.19" evidence="1"/>
<dbReference type="EMBL" id="CP000158">
    <property type="protein sequence ID" value="ABI75870.1"/>
    <property type="molecule type" value="Genomic_DNA"/>
</dbReference>
<dbReference type="RefSeq" id="WP_011648344.1">
    <property type="nucleotide sequence ID" value="NC_008358.1"/>
</dbReference>
<dbReference type="SMR" id="Q0BWU4"/>
<dbReference type="STRING" id="228405.HNE_3376"/>
<dbReference type="KEGG" id="hne:HNE_3376"/>
<dbReference type="eggNOG" id="COG0139">
    <property type="taxonomic scope" value="Bacteria"/>
</dbReference>
<dbReference type="HOGENOM" id="CLU_048577_5_0_5"/>
<dbReference type="UniPathway" id="UPA00031">
    <property type="reaction ID" value="UER00008"/>
</dbReference>
<dbReference type="Proteomes" id="UP000001959">
    <property type="component" value="Chromosome"/>
</dbReference>
<dbReference type="GO" id="GO:0005737">
    <property type="term" value="C:cytoplasm"/>
    <property type="evidence" value="ECO:0007669"/>
    <property type="project" value="UniProtKB-SubCell"/>
</dbReference>
<dbReference type="GO" id="GO:0000287">
    <property type="term" value="F:magnesium ion binding"/>
    <property type="evidence" value="ECO:0007669"/>
    <property type="project" value="UniProtKB-UniRule"/>
</dbReference>
<dbReference type="GO" id="GO:0004635">
    <property type="term" value="F:phosphoribosyl-AMP cyclohydrolase activity"/>
    <property type="evidence" value="ECO:0007669"/>
    <property type="project" value="UniProtKB-UniRule"/>
</dbReference>
<dbReference type="GO" id="GO:0008270">
    <property type="term" value="F:zinc ion binding"/>
    <property type="evidence" value="ECO:0007669"/>
    <property type="project" value="UniProtKB-UniRule"/>
</dbReference>
<dbReference type="GO" id="GO:0000105">
    <property type="term" value="P:L-histidine biosynthetic process"/>
    <property type="evidence" value="ECO:0007669"/>
    <property type="project" value="UniProtKB-UniRule"/>
</dbReference>
<dbReference type="FunFam" id="3.10.20.810:FF:000001">
    <property type="entry name" value="Histidine biosynthesis bifunctional protein HisIE"/>
    <property type="match status" value="1"/>
</dbReference>
<dbReference type="Gene3D" id="3.10.20.810">
    <property type="entry name" value="Phosphoribosyl-AMP cyclohydrolase"/>
    <property type="match status" value="1"/>
</dbReference>
<dbReference type="HAMAP" id="MF_01021">
    <property type="entry name" value="HisI"/>
    <property type="match status" value="1"/>
</dbReference>
<dbReference type="InterPro" id="IPR026660">
    <property type="entry name" value="PRA-CH"/>
</dbReference>
<dbReference type="InterPro" id="IPR002496">
    <property type="entry name" value="PRib_AMP_CycHydrolase_dom"/>
</dbReference>
<dbReference type="InterPro" id="IPR038019">
    <property type="entry name" value="PRib_AMP_CycHydrolase_sf"/>
</dbReference>
<dbReference type="NCBIfam" id="NF000768">
    <property type="entry name" value="PRK00051.1"/>
    <property type="match status" value="1"/>
</dbReference>
<dbReference type="PANTHER" id="PTHR42945">
    <property type="entry name" value="HISTIDINE BIOSYNTHESIS BIFUNCTIONAL PROTEIN"/>
    <property type="match status" value="1"/>
</dbReference>
<dbReference type="PANTHER" id="PTHR42945:SF1">
    <property type="entry name" value="HISTIDINE BIOSYNTHESIS BIFUNCTIONAL PROTEIN HIS7"/>
    <property type="match status" value="1"/>
</dbReference>
<dbReference type="Pfam" id="PF01502">
    <property type="entry name" value="PRA-CH"/>
    <property type="match status" value="1"/>
</dbReference>
<dbReference type="SUPFAM" id="SSF141734">
    <property type="entry name" value="HisI-like"/>
    <property type="match status" value="1"/>
</dbReference>
<reference key="1">
    <citation type="journal article" date="2006" name="J. Bacteriol.">
        <title>Comparative genomic evidence for a close relationship between the dimorphic prosthecate bacteria Hyphomonas neptunium and Caulobacter crescentus.</title>
        <authorList>
            <person name="Badger J.H."/>
            <person name="Hoover T.R."/>
            <person name="Brun Y.V."/>
            <person name="Weiner R.M."/>
            <person name="Laub M.T."/>
            <person name="Alexandre G."/>
            <person name="Mrazek J."/>
            <person name="Ren Q."/>
            <person name="Paulsen I.T."/>
            <person name="Nelson K.E."/>
            <person name="Khouri H.M."/>
            <person name="Radune D."/>
            <person name="Sosa J."/>
            <person name="Dodson R.J."/>
            <person name="Sullivan S.A."/>
            <person name="Rosovitz M.J."/>
            <person name="Madupu R."/>
            <person name="Brinkac L.M."/>
            <person name="Durkin A.S."/>
            <person name="Daugherty S.C."/>
            <person name="Kothari S.P."/>
            <person name="Giglio M.G."/>
            <person name="Zhou L."/>
            <person name="Haft D.H."/>
            <person name="Selengut J.D."/>
            <person name="Davidsen T.M."/>
            <person name="Yang Q."/>
            <person name="Zafar N."/>
            <person name="Ward N.L."/>
        </authorList>
    </citation>
    <scope>NUCLEOTIDE SEQUENCE [LARGE SCALE GENOMIC DNA]</scope>
    <source>
        <strain>ATCC 15444</strain>
    </source>
</reference>
<gene>
    <name evidence="1" type="primary">hisI</name>
    <name type="ordered locus">HNE_3376</name>
</gene>
<evidence type="ECO:0000255" key="1">
    <source>
        <dbReference type="HAMAP-Rule" id="MF_01021"/>
    </source>
</evidence>
<protein>
    <recommendedName>
        <fullName evidence="1">Phosphoribosyl-AMP cyclohydrolase</fullName>
        <shortName evidence="1">PRA-CH</shortName>
        <ecNumber evidence="1">3.5.4.19</ecNumber>
    </recommendedName>
</protein>